<feature type="chain" id="PRO_0000189284" description="4-diphosphocytidyl-2-C-methyl-D-erythritol kinase">
    <location>
        <begin position="1"/>
        <end position="409"/>
    </location>
</feature>
<feature type="region of interest" description="Disordered" evidence="3">
    <location>
        <begin position="1"/>
        <end position="26"/>
    </location>
</feature>
<feature type="compositionally biased region" description="Polar residues" evidence="3">
    <location>
        <begin position="1"/>
        <end position="22"/>
    </location>
</feature>
<feature type="active site" evidence="1">
    <location>
        <position position="243"/>
    </location>
</feature>
<feature type="binding site" evidence="2">
    <location>
        <begin position="201"/>
        <end position="211"/>
    </location>
    <ligand>
        <name>ATP</name>
        <dbReference type="ChEBI" id="CHEBI:30616"/>
    </ligand>
</feature>
<reference key="1">
    <citation type="journal article" date="2003" name="Genome Res.">
        <title>Tropheryma whipplei twist: a human pathogenic Actinobacteria with a reduced genome.</title>
        <authorList>
            <person name="Raoult D."/>
            <person name="Ogata H."/>
            <person name="Audic S."/>
            <person name="Robert C."/>
            <person name="Suhre K."/>
            <person name="Drancourt M."/>
            <person name="Claverie J.-M."/>
        </authorList>
    </citation>
    <scope>NUCLEOTIDE SEQUENCE [LARGE SCALE GENOMIC DNA]</scope>
    <source>
        <strain>Twist</strain>
    </source>
</reference>
<organism>
    <name type="scientific">Tropheryma whipplei (strain Twist)</name>
    <name type="common">Whipple's bacillus</name>
    <dbReference type="NCBI Taxonomy" id="203267"/>
    <lineage>
        <taxon>Bacteria</taxon>
        <taxon>Bacillati</taxon>
        <taxon>Actinomycetota</taxon>
        <taxon>Actinomycetes</taxon>
        <taxon>Micrococcales</taxon>
        <taxon>Tropherymataceae</taxon>
        <taxon>Tropheryma</taxon>
    </lineage>
</organism>
<keyword id="KW-0067">ATP-binding</keyword>
<keyword id="KW-0414">Isoprene biosynthesis</keyword>
<keyword id="KW-0418">Kinase</keyword>
<keyword id="KW-0547">Nucleotide-binding</keyword>
<keyword id="KW-1185">Reference proteome</keyword>
<keyword id="KW-0808">Transferase</keyword>
<evidence type="ECO:0000250" key="1"/>
<evidence type="ECO:0000255" key="2"/>
<evidence type="ECO:0000256" key="3">
    <source>
        <dbReference type="SAM" id="MobiDB-lite"/>
    </source>
</evidence>
<evidence type="ECO:0000305" key="4"/>
<protein>
    <recommendedName>
        <fullName>4-diphosphocytidyl-2-C-methyl-D-erythritol kinase</fullName>
        <shortName>CMK</shortName>
        <ecNumber>2.7.1.148</ecNumber>
    </recommendedName>
    <alternativeName>
        <fullName>4-(cytidine-5'-diphospho)-2-C-methyl-D-erythritol kinase</fullName>
    </alternativeName>
</protein>
<sequence>MKTDGGNTWRASHSKPLNTANTMGEPFSHSEYSVHADQSEFYLNELTEHSGQDNPCMNTSRLNTNRYGHPVVHPCPKIHCICTQSNIAAIGSDCTGCVDIAQACKMLRGGLGCTQDPCVKNPHTQCFTDVSNHAMRNVLPLNVSNTEQFPIQIEYANGRNPVLNPMDDLAMRAALLLSKDIDLQNTHILPSTRISIEKNIPVAAGLAGGSADAAAVLLGINSAWQTNYSRCDLLGKAGALGADVPFLIWGGAAYGSGTGSCVTFFETQTLYWVLCFSKHPLSTRKVFQELDRQRSGAGCNHHPVFSNPAECAEMLKKAIKRGPEALAALLHNDLTSAAKMLMPEIAERIKAAERCPGILRAIISGSGPTLALLAEDAEAANRACSILKDTGVICKAVSSPAYSSIYWQT</sequence>
<name>ISPE_TROWT</name>
<accession>Q83FU3</accession>
<proteinExistence type="inferred from homology"/>
<gene>
    <name type="primary">ispE</name>
    <name type="ordered locus">TWT_605</name>
</gene>
<dbReference type="EC" id="2.7.1.148"/>
<dbReference type="EMBL" id="AE014184">
    <property type="protein sequence ID" value="AAO44702.1"/>
    <property type="status" value="ALT_INIT"/>
    <property type="molecule type" value="Genomic_DNA"/>
</dbReference>
<dbReference type="SMR" id="Q83FU3"/>
<dbReference type="STRING" id="203267.TWT_605"/>
<dbReference type="KEGG" id="twh:TWT_605"/>
<dbReference type="eggNOG" id="COG1947">
    <property type="taxonomic scope" value="Bacteria"/>
</dbReference>
<dbReference type="HOGENOM" id="CLU_585165_0_0_11"/>
<dbReference type="OrthoDB" id="3173073at2"/>
<dbReference type="UniPathway" id="UPA00056">
    <property type="reaction ID" value="UER00094"/>
</dbReference>
<dbReference type="Proteomes" id="UP000002200">
    <property type="component" value="Chromosome"/>
</dbReference>
<dbReference type="GO" id="GO:0050515">
    <property type="term" value="F:4-(cytidine 5'-diphospho)-2-C-methyl-D-erythritol kinase activity"/>
    <property type="evidence" value="ECO:0007669"/>
    <property type="project" value="UniProtKB-UniRule"/>
</dbReference>
<dbReference type="GO" id="GO:0005524">
    <property type="term" value="F:ATP binding"/>
    <property type="evidence" value="ECO:0007669"/>
    <property type="project" value="UniProtKB-UniRule"/>
</dbReference>
<dbReference type="GO" id="GO:0019288">
    <property type="term" value="P:isopentenyl diphosphate biosynthetic process, methylerythritol 4-phosphate pathway"/>
    <property type="evidence" value="ECO:0007669"/>
    <property type="project" value="UniProtKB-UniRule"/>
</dbReference>
<dbReference type="GO" id="GO:0016114">
    <property type="term" value="P:terpenoid biosynthetic process"/>
    <property type="evidence" value="ECO:0007669"/>
    <property type="project" value="InterPro"/>
</dbReference>
<dbReference type="Gene3D" id="3.30.230.10">
    <property type="match status" value="1"/>
</dbReference>
<dbReference type="Gene3D" id="3.30.70.890">
    <property type="entry name" value="GHMP kinase, C-terminal domain"/>
    <property type="match status" value="1"/>
</dbReference>
<dbReference type="HAMAP" id="MF_00061">
    <property type="entry name" value="IspE"/>
    <property type="match status" value="1"/>
</dbReference>
<dbReference type="InterPro" id="IPR013750">
    <property type="entry name" value="GHMP_kinase_C_dom"/>
</dbReference>
<dbReference type="InterPro" id="IPR036554">
    <property type="entry name" value="GHMP_kinase_C_sf"/>
</dbReference>
<dbReference type="InterPro" id="IPR006204">
    <property type="entry name" value="GHMP_kinase_N_dom"/>
</dbReference>
<dbReference type="InterPro" id="IPR004424">
    <property type="entry name" value="IspE"/>
</dbReference>
<dbReference type="InterPro" id="IPR020568">
    <property type="entry name" value="Ribosomal_Su5_D2-typ_SF"/>
</dbReference>
<dbReference type="InterPro" id="IPR014721">
    <property type="entry name" value="Ribsml_uS5_D2-typ_fold_subgr"/>
</dbReference>
<dbReference type="PANTHER" id="PTHR43527">
    <property type="entry name" value="4-DIPHOSPHOCYTIDYL-2-C-METHYL-D-ERYTHRITOL KINASE, CHLOROPLASTIC"/>
    <property type="match status" value="1"/>
</dbReference>
<dbReference type="PANTHER" id="PTHR43527:SF2">
    <property type="entry name" value="4-DIPHOSPHOCYTIDYL-2-C-METHYL-D-ERYTHRITOL KINASE, CHLOROPLASTIC"/>
    <property type="match status" value="1"/>
</dbReference>
<dbReference type="Pfam" id="PF08544">
    <property type="entry name" value="GHMP_kinases_C"/>
    <property type="match status" value="1"/>
</dbReference>
<dbReference type="Pfam" id="PF00288">
    <property type="entry name" value="GHMP_kinases_N"/>
    <property type="match status" value="1"/>
</dbReference>
<dbReference type="SUPFAM" id="SSF55060">
    <property type="entry name" value="GHMP Kinase, C-terminal domain"/>
    <property type="match status" value="1"/>
</dbReference>
<dbReference type="SUPFAM" id="SSF54211">
    <property type="entry name" value="Ribosomal protein S5 domain 2-like"/>
    <property type="match status" value="1"/>
</dbReference>
<comment type="function">
    <text evidence="1">Catalyzes the phosphorylation of the position 2 hydroxy group of 4-diphosphocytidyl-2C-methyl-D-erythritol.</text>
</comment>
<comment type="catalytic activity">
    <reaction>
        <text>4-CDP-2-C-methyl-D-erythritol + ATP = 4-CDP-2-C-methyl-D-erythritol 2-phosphate + ADP + H(+)</text>
        <dbReference type="Rhea" id="RHEA:18437"/>
        <dbReference type="ChEBI" id="CHEBI:15378"/>
        <dbReference type="ChEBI" id="CHEBI:30616"/>
        <dbReference type="ChEBI" id="CHEBI:57823"/>
        <dbReference type="ChEBI" id="CHEBI:57919"/>
        <dbReference type="ChEBI" id="CHEBI:456216"/>
        <dbReference type="EC" id="2.7.1.148"/>
    </reaction>
</comment>
<comment type="pathway">
    <text>Isoprenoid biosynthesis; isopentenyl diphosphate biosynthesis via DXP pathway; isopentenyl diphosphate from 1-deoxy-D-xylulose 5-phosphate: step 3/6.</text>
</comment>
<comment type="similarity">
    <text evidence="4">Belongs to the GHMP kinase family. IspE subfamily.</text>
</comment>
<comment type="caution">
    <text evidence="4">Cys-97 is present instead of the conserved Lys which is expected to be an active site residue.</text>
</comment>
<comment type="sequence caution" evidence="4">
    <conflict type="erroneous initiation">
        <sequence resource="EMBL-CDS" id="AAO44702"/>
    </conflict>
</comment>